<dbReference type="EC" id="6.1.1.5" evidence="1"/>
<dbReference type="EMBL" id="BX571966">
    <property type="protein sequence ID" value="CAH38786.1"/>
    <property type="molecule type" value="Genomic_DNA"/>
</dbReference>
<dbReference type="RefSeq" id="WP_011205587.1">
    <property type="nucleotide sequence ID" value="NC_006351.1"/>
</dbReference>
<dbReference type="RefSeq" id="YP_111325.1">
    <property type="nucleotide sequence ID" value="NC_006351.1"/>
</dbReference>
<dbReference type="SMR" id="Q63KP6"/>
<dbReference type="STRING" id="272560.BPSS1315"/>
<dbReference type="KEGG" id="bps:BPSS1315"/>
<dbReference type="PATRIC" id="fig|272560.51.peg.4610"/>
<dbReference type="eggNOG" id="COG0060">
    <property type="taxonomic scope" value="Bacteria"/>
</dbReference>
<dbReference type="Proteomes" id="UP000000605">
    <property type="component" value="Chromosome 2"/>
</dbReference>
<dbReference type="GO" id="GO:0005829">
    <property type="term" value="C:cytosol"/>
    <property type="evidence" value="ECO:0007669"/>
    <property type="project" value="TreeGrafter"/>
</dbReference>
<dbReference type="GO" id="GO:0002161">
    <property type="term" value="F:aminoacyl-tRNA deacylase activity"/>
    <property type="evidence" value="ECO:0007669"/>
    <property type="project" value="InterPro"/>
</dbReference>
<dbReference type="GO" id="GO:0005524">
    <property type="term" value="F:ATP binding"/>
    <property type="evidence" value="ECO:0007669"/>
    <property type="project" value="UniProtKB-UniRule"/>
</dbReference>
<dbReference type="GO" id="GO:0004822">
    <property type="term" value="F:isoleucine-tRNA ligase activity"/>
    <property type="evidence" value="ECO:0007669"/>
    <property type="project" value="UniProtKB-UniRule"/>
</dbReference>
<dbReference type="GO" id="GO:0000049">
    <property type="term" value="F:tRNA binding"/>
    <property type="evidence" value="ECO:0007669"/>
    <property type="project" value="InterPro"/>
</dbReference>
<dbReference type="GO" id="GO:0008270">
    <property type="term" value="F:zinc ion binding"/>
    <property type="evidence" value="ECO:0007669"/>
    <property type="project" value="UniProtKB-UniRule"/>
</dbReference>
<dbReference type="GO" id="GO:0006428">
    <property type="term" value="P:isoleucyl-tRNA aminoacylation"/>
    <property type="evidence" value="ECO:0007669"/>
    <property type="project" value="UniProtKB-UniRule"/>
</dbReference>
<dbReference type="CDD" id="cd07960">
    <property type="entry name" value="Anticodon_Ia_Ile_BEm"/>
    <property type="match status" value="1"/>
</dbReference>
<dbReference type="FunFam" id="3.40.50.620:FF:000042">
    <property type="entry name" value="Isoleucine--tRNA ligase"/>
    <property type="match status" value="1"/>
</dbReference>
<dbReference type="Gene3D" id="1.10.730.20">
    <property type="match status" value="1"/>
</dbReference>
<dbReference type="Gene3D" id="3.40.50.620">
    <property type="entry name" value="HUPs"/>
    <property type="match status" value="2"/>
</dbReference>
<dbReference type="Gene3D" id="3.90.740.10">
    <property type="entry name" value="Valyl/Leucyl/Isoleucyl-tRNA synthetase, editing domain"/>
    <property type="match status" value="1"/>
</dbReference>
<dbReference type="HAMAP" id="MF_02002">
    <property type="entry name" value="Ile_tRNA_synth_type1"/>
    <property type="match status" value="1"/>
</dbReference>
<dbReference type="InterPro" id="IPR001412">
    <property type="entry name" value="aa-tRNA-synth_I_CS"/>
</dbReference>
<dbReference type="InterPro" id="IPR002300">
    <property type="entry name" value="aa-tRNA-synth_Ia"/>
</dbReference>
<dbReference type="InterPro" id="IPR033708">
    <property type="entry name" value="Anticodon_Ile_BEm"/>
</dbReference>
<dbReference type="InterPro" id="IPR002301">
    <property type="entry name" value="Ile-tRNA-ligase"/>
</dbReference>
<dbReference type="InterPro" id="IPR023585">
    <property type="entry name" value="Ile-tRNA-ligase_type1"/>
</dbReference>
<dbReference type="InterPro" id="IPR050081">
    <property type="entry name" value="Ile-tRNA_ligase"/>
</dbReference>
<dbReference type="InterPro" id="IPR013155">
    <property type="entry name" value="M/V/L/I-tRNA-synth_anticd-bd"/>
</dbReference>
<dbReference type="InterPro" id="IPR014729">
    <property type="entry name" value="Rossmann-like_a/b/a_fold"/>
</dbReference>
<dbReference type="InterPro" id="IPR009080">
    <property type="entry name" value="tRNAsynth_Ia_anticodon-bd"/>
</dbReference>
<dbReference type="InterPro" id="IPR009008">
    <property type="entry name" value="Val/Leu/Ile-tRNA-synth_edit"/>
</dbReference>
<dbReference type="InterPro" id="IPR010663">
    <property type="entry name" value="Znf_FPG/IleRS"/>
</dbReference>
<dbReference type="NCBIfam" id="TIGR00392">
    <property type="entry name" value="ileS"/>
    <property type="match status" value="1"/>
</dbReference>
<dbReference type="PANTHER" id="PTHR42765:SF1">
    <property type="entry name" value="ISOLEUCINE--TRNA LIGASE, MITOCHONDRIAL"/>
    <property type="match status" value="1"/>
</dbReference>
<dbReference type="PANTHER" id="PTHR42765">
    <property type="entry name" value="SOLEUCYL-TRNA SYNTHETASE"/>
    <property type="match status" value="1"/>
</dbReference>
<dbReference type="Pfam" id="PF08264">
    <property type="entry name" value="Anticodon_1"/>
    <property type="match status" value="1"/>
</dbReference>
<dbReference type="Pfam" id="PF00133">
    <property type="entry name" value="tRNA-synt_1"/>
    <property type="match status" value="2"/>
</dbReference>
<dbReference type="Pfam" id="PF06827">
    <property type="entry name" value="zf-FPG_IleRS"/>
    <property type="match status" value="1"/>
</dbReference>
<dbReference type="PRINTS" id="PR00984">
    <property type="entry name" value="TRNASYNTHILE"/>
</dbReference>
<dbReference type="SUPFAM" id="SSF47323">
    <property type="entry name" value="Anticodon-binding domain of a subclass of class I aminoacyl-tRNA synthetases"/>
    <property type="match status" value="1"/>
</dbReference>
<dbReference type="SUPFAM" id="SSF52374">
    <property type="entry name" value="Nucleotidylyl transferase"/>
    <property type="match status" value="1"/>
</dbReference>
<dbReference type="SUPFAM" id="SSF50677">
    <property type="entry name" value="ValRS/IleRS/LeuRS editing domain"/>
    <property type="match status" value="1"/>
</dbReference>
<dbReference type="PROSITE" id="PS00178">
    <property type="entry name" value="AA_TRNA_LIGASE_I"/>
    <property type="match status" value="1"/>
</dbReference>
<protein>
    <recommendedName>
        <fullName evidence="1">Isoleucine--tRNA ligase 2</fullName>
        <ecNumber evidence="1">6.1.1.5</ecNumber>
    </recommendedName>
    <alternativeName>
        <fullName evidence="1">Isoleucyl-tRNA synthetase 2</fullName>
        <shortName evidence="1">IleRS 2</shortName>
    </alternativeName>
</protein>
<accession>Q63KP6</accession>
<organism>
    <name type="scientific">Burkholderia pseudomallei (strain K96243)</name>
    <dbReference type="NCBI Taxonomy" id="272560"/>
    <lineage>
        <taxon>Bacteria</taxon>
        <taxon>Pseudomonadati</taxon>
        <taxon>Pseudomonadota</taxon>
        <taxon>Betaproteobacteria</taxon>
        <taxon>Burkholderiales</taxon>
        <taxon>Burkholderiaceae</taxon>
        <taxon>Burkholderia</taxon>
        <taxon>pseudomallei group</taxon>
    </lineage>
</organism>
<feature type="chain" id="PRO_0000098371" description="Isoleucine--tRNA ligase 2">
    <location>
        <begin position="1"/>
        <end position="967"/>
    </location>
</feature>
<feature type="region of interest" description="Disordered" evidence="2">
    <location>
        <begin position="430"/>
        <end position="463"/>
    </location>
</feature>
<feature type="short sequence motif" description="'HIGH' region">
    <location>
        <begin position="58"/>
        <end position="68"/>
    </location>
</feature>
<feature type="short sequence motif" description="'KMSKS' region">
    <location>
        <begin position="639"/>
        <end position="643"/>
    </location>
</feature>
<feature type="binding site" evidence="1">
    <location>
        <position position="598"/>
    </location>
    <ligand>
        <name>L-isoleucyl-5'-AMP</name>
        <dbReference type="ChEBI" id="CHEBI:178002"/>
    </ligand>
</feature>
<feature type="binding site" evidence="1">
    <location>
        <position position="642"/>
    </location>
    <ligand>
        <name>ATP</name>
        <dbReference type="ChEBI" id="CHEBI:30616"/>
    </ligand>
</feature>
<feature type="binding site" evidence="1">
    <location>
        <position position="922"/>
    </location>
    <ligand>
        <name>Zn(2+)</name>
        <dbReference type="ChEBI" id="CHEBI:29105"/>
    </ligand>
</feature>
<feature type="binding site" evidence="1">
    <location>
        <position position="925"/>
    </location>
    <ligand>
        <name>Zn(2+)</name>
        <dbReference type="ChEBI" id="CHEBI:29105"/>
    </ligand>
</feature>
<feature type="binding site" evidence="1">
    <location>
        <position position="942"/>
    </location>
    <ligand>
        <name>Zn(2+)</name>
        <dbReference type="ChEBI" id="CHEBI:29105"/>
    </ligand>
</feature>
<feature type="binding site" evidence="1">
    <location>
        <position position="945"/>
    </location>
    <ligand>
        <name>Zn(2+)</name>
        <dbReference type="ChEBI" id="CHEBI:29105"/>
    </ligand>
</feature>
<comment type="function">
    <text evidence="1">Catalyzes the attachment of isoleucine to tRNA(Ile). As IleRS can inadvertently accommodate and process structurally similar amino acids such as valine, to avoid such errors it has two additional distinct tRNA(Ile)-dependent editing activities. One activity is designated as 'pretransfer' editing and involves the hydrolysis of activated Val-AMP. The other activity is designated 'posttransfer' editing and involves deacylation of mischarged Val-tRNA(Ile).</text>
</comment>
<comment type="catalytic activity">
    <reaction evidence="1">
        <text>tRNA(Ile) + L-isoleucine + ATP = L-isoleucyl-tRNA(Ile) + AMP + diphosphate</text>
        <dbReference type="Rhea" id="RHEA:11060"/>
        <dbReference type="Rhea" id="RHEA-COMP:9666"/>
        <dbReference type="Rhea" id="RHEA-COMP:9695"/>
        <dbReference type="ChEBI" id="CHEBI:30616"/>
        <dbReference type="ChEBI" id="CHEBI:33019"/>
        <dbReference type="ChEBI" id="CHEBI:58045"/>
        <dbReference type="ChEBI" id="CHEBI:78442"/>
        <dbReference type="ChEBI" id="CHEBI:78528"/>
        <dbReference type="ChEBI" id="CHEBI:456215"/>
        <dbReference type="EC" id="6.1.1.5"/>
    </reaction>
</comment>
<comment type="cofactor">
    <cofactor evidence="1">
        <name>Zn(2+)</name>
        <dbReference type="ChEBI" id="CHEBI:29105"/>
    </cofactor>
    <text evidence="1">Binds 1 zinc ion per subunit.</text>
</comment>
<comment type="subunit">
    <text evidence="1">Monomer.</text>
</comment>
<comment type="subcellular location">
    <subcellularLocation>
        <location evidence="1">Cytoplasm</location>
    </subcellularLocation>
</comment>
<comment type="domain">
    <text evidence="1">IleRS has two distinct active sites: one for aminoacylation and one for editing. The misactivated valine is translocated from the active site to the editing site, which sterically excludes the correctly activated isoleucine. The single editing site contains two valyl binding pockets, one specific for each substrate (Val-AMP or Val-tRNA(Ile)).</text>
</comment>
<comment type="similarity">
    <text evidence="1">Belongs to the class-I aminoacyl-tRNA synthetase family. IleS type 1 subfamily.</text>
</comment>
<evidence type="ECO:0000255" key="1">
    <source>
        <dbReference type="HAMAP-Rule" id="MF_02002"/>
    </source>
</evidence>
<evidence type="ECO:0000256" key="2">
    <source>
        <dbReference type="SAM" id="MobiDB-lite"/>
    </source>
</evidence>
<name>SYI2_BURPS</name>
<reference key="1">
    <citation type="journal article" date="2004" name="Proc. Natl. Acad. Sci. U.S.A.">
        <title>Genomic plasticity of the causative agent of melioidosis, Burkholderia pseudomallei.</title>
        <authorList>
            <person name="Holden M.T.G."/>
            <person name="Titball R.W."/>
            <person name="Peacock S.J."/>
            <person name="Cerdeno-Tarraga A.-M."/>
            <person name="Atkins T."/>
            <person name="Crossman L.C."/>
            <person name="Pitt T."/>
            <person name="Churcher C."/>
            <person name="Mungall K.L."/>
            <person name="Bentley S.D."/>
            <person name="Sebaihia M."/>
            <person name="Thomson N.R."/>
            <person name="Bason N."/>
            <person name="Beacham I.R."/>
            <person name="Brooks K."/>
            <person name="Brown K.A."/>
            <person name="Brown N.F."/>
            <person name="Challis G.L."/>
            <person name="Cherevach I."/>
            <person name="Chillingworth T."/>
            <person name="Cronin A."/>
            <person name="Crossett B."/>
            <person name="Davis P."/>
            <person name="DeShazer D."/>
            <person name="Feltwell T."/>
            <person name="Fraser A."/>
            <person name="Hance Z."/>
            <person name="Hauser H."/>
            <person name="Holroyd S."/>
            <person name="Jagels K."/>
            <person name="Keith K.E."/>
            <person name="Maddison M."/>
            <person name="Moule S."/>
            <person name="Price C."/>
            <person name="Quail M.A."/>
            <person name="Rabbinowitsch E."/>
            <person name="Rutherford K."/>
            <person name="Sanders M."/>
            <person name="Simmonds M."/>
            <person name="Songsivilai S."/>
            <person name="Stevens K."/>
            <person name="Tumapa S."/>
            <person name="Vesaratchavest M."/>
            <person name="Whitehead S."/>
            <person name="Yeats C."/>
            <person name="Barrell B.G."/>
            <person name="Oyston P.C.F."/>
            <person name="Parkhill J."/>
        </authorList>
    </citation>
    <scope>NUCLEOTIDE SEQUENCE [LARGE SCALE GENOMIC DNA]</scope>
    <source>
        <strain>K96243</strain>
    </source>
</reference>
<keyword id="KW-0030">Aminoacyl-tRNA synthetase</keyword>
<keyword id="KW-0067">ATP-binding</keyword>
<keyword id="KW-0963">Cytoplasm</keyword>
<keyword id="KW-0436">Ligase</keyword>
<keyword id="KW-0479">Metal-binding</keyword>
<keyword id="KW-0547">Nucleotide-binding</keyword>
<keyword id="KW-0648">Protein biosynthesis</keyword>
<keyword id="KW-1185">Reference proteome</keyword>
<keyword id="KW-0862">Zinc</keyword>
<proteinExistence type="inferred from homology"/>
<gene>
    <name evidence="1" type="primary">ileS2</name>
    <name type="ordered locus">BPSS1315</name>
</gene>
<sequence>MSEYKETLNLLQTPFPMKGDLPRREPALVERWAAQRVYARMRAAAAGRPPFVLHDGPPYANGDIHIGHAVNKVLKDIVLKSRFAAGYDAQWIPGWDCHGMPIEHRIEQLHGRGLPPEAVQRLCREYAFEQTERQRRDFLRLGLLGDWPHAFRTMDFRTEANELRFLERIRARGLLYRGQKPVNWCVDCQSALAEAELEYARKTSVAIHAGLRVRDPVDFASRFRRRPVLDKPAMLVVWTTTPWTIPGNAAAGVRADAPYGLYDTPGALIVVAQPLADALFASLGVDHALCALARGRELVGLALGQPFFAGRDVPVVEAEFVTLDAGTGIVHLAPAHGAEDAELCRRLGIAGENVVDGAGRFAADLPEIGGLPLADGIARIVAKLRADGTLVREAAFEHAYPHCWRHKTPILFRSTPQWFIGMDIECEQGEADPGRADVTEEAGATGEARKVGKAEEAEEAGPVKTLRASARDAIADVPFYPPSARQRMEAMIDGRPDWCVSRQRTWGVPLPYFVRRDDRSLHPRSARLVEAVAARVERDGIAAWSRLRPAELGVDENAYEKLSDTLDVWFDSGSIHATVYRDAARADTGGYPADLYLEGADQHRGWFGASLMTGCAADGRAPFRAILTHGFVVDGAGRKMSKSLGNTVSPQRIADTRGADILRLWIASTDYAAEMSISDEILERVVETYRRMRNTLRFLLQNVADFDPRDDAVPAGQLLDVDRYALARCREFVDACRSAYARYDFLAVTRLAHGYCAEELGGFYLDALKDRLYASVADGVERRAAQTALHSVLANLLISIAPILSFTAEEAWTVFAGDERDSVFLHTWDEHAPPPDDAALARWAHVRALRPHVTKALEEARGAALIGRSSEAELVVRAPRDVLDALAPLHGELAAVFIVAGVTLETADQIAVAVARTPLARCERCWRHEPSVAAHASGDALCARCRHALSRRARAERSEPRAAVGSR</sequence>